<dbReference type="EMBL" id="FM180568">
    <property type="protein sequence ID" value="CAS12118.1"/>
    <property type="molecule type" value="Genomic_DNA"/>
</dbReference>
<dbReference type="RefSeq" id="WP_000148581.1">
    <property type="nucleotide sequence ID" value="NC_011601.1"/>
</dbReference>
<dbReference type="SMR" id="B7UQQ4"/>
<dbReference type="GeneID" id="93777580"/>
<dbReference type="KEGG" id="ecg:E2348C_4570"/>
<dbReference type="HOGENOM" id="CLU_128576_0_0_6"/>
<dbReference type="Proteomes" id="UP000008205">
    <property type="component" value="Chromosome"/>
</dbReference>
<dbReference type="GO" id="GO:0009347">
    <property type="term" value="C:aspartate carbamoyltransferase complex"/>
    <property type="evidence" value="ECO:0007669"/>
    <property type="project" value="InterPro"/>
</dbReference>
<dbReference type="GO" id="GO:0046872">
    <property type="term" value="F:metal ion binding"/>
    <property type="evidence" value="ECO:0007669"/>
    <property type="project" value="UniProtKB-KW"/>
</dbReference>
<dbReference type="GO" id="GO:0006207">
    <property type="term" value="P:'de novo' pyrimidine nucleobase biosynthetic process"/>
    <property type="evidence" value="ECO:0007669"/>
    <property type="project" value="InterPro"/>
</dbReference>
<dbReference type="GO" id="GO:0006221">
    <property type="term" value="P:pyrimidine nucleotide biosynthetic process"/>
    <property type="evidence" value="ECO:0007669"/>
    <property type="project" value="UniProtKB-UniRule"/>
</dbReference>
<dbReference type="FunFam" id="2.30.30.20:FF:000001">
    <property type="entry name" value="Aspartate carbamoyltransferase regulatory chain"/>
    <property type="match status" value="1"/>
</dbReference>
<dbReference type="FunFam" id="3.30.70.140:FF:000001">
    <property type="entry name" value="Aspartate carbamoyltransferase regulatory chain"/>
    <property type="match status" value="1"/>
</dbReference>
<dbReference type="Gene3D" id="2.30.30.20">
    <property type="entry name" value="Aspartate carbamoyltransferase regulatory subunit, C-terminal domain"/>
    <property type="match status" value="1"/>
</dbReference>
<dbReference type="Gene3D" id="3.30.70.140">
    <property type="entry name" value="Aspartate carbamoyltransferase regulatory subunit, N-terminal domain"/>
    <property type="match status" value="1"/>
</dbReference>
<dbReference type="HAMAP" id="MF_00002">
    <property type="entry name" value="Asp_carb_tr_reg"/>
    <property type="match status" value="1"/>
</dbReference>
<dbReference type="InterPro" id="IPR020545">
    <property type="entry name" value="Asp_carbamoyltransf_reg_N"/>
</dbReference>
<dbReference type="InterPro" id="IPR002801">
    <property type="entry name" value="Asp_carbamoylTrfase_reg"/>
</dbReference>
<dbReference type="InterPro" id="IPR020542">
    <property type="entry name" value="Asp_carbamoyltrfase_reg_C"/>
</dbReference>
<dbReference type="InterPro" id="IPR036792">
    <property type="entry name" value="Asp_carbatrfase_reg_C_sf"/>
</dbReference>
<dbReference type="InterPro" id="IPR036793">
    <property type="entry name" value="Asp_carbatrfase_reg_N_sf"/>
</dbReference>
<dbReference type="NCBIfam" id="TIGR00240">
    <property type="entry name" value="ATCase_reg"/>
    <property type="match status" value="1"/>
</dbReference>
<dbReference type="PANTHER" id="PTHR35805">
    <property type="entry name" value="ASPARTATE CARBAMOYLTRANSFERASE REGULATORY CHAIN"/>
    <property type="match status" value="1"/>
</dbReference>
<dbReference type="PANTHER" id="PTHR35805:SF1">
    <property type="entry name" value="ASPARTATE CARBAMOYLTRANSFERASE REGULATORY CHAIN"/>
    <property type="match status" value="1"/>
</dbReference>
<dbReference type="Pfam" id="PF01948">
    <property type="entry name" value="PyrI"/>
    <property type="match status" value="1"/>
</dbReference>
<dbReference type="Pfam" id="PF02748">
    <property type="entry name" value="PyrI_C"/>
    <property type="match status" value="1"/>
</dbReference>
<dbReference type="SUPFAM" id="SSF57825">
    <property type="entry name" value="Aspartate carbamoyltransferase, Regulatory-chain, C-terminal domain"/>
    <property type="match status" value="1"/>
</dbReference>
<dbReference type="SUPFAM" id="SSF54893">
    <property type="entry name" value="Aspartate carbamoyltransferase, Regulatory-chain, N-terminal domain"/>
    <property type="match status" value="1"/>
</dbReference>
<organism>
    <name type="scientific">Escherichia coli O127:H6 (strain E2348/69 / EPEC)</name>
    <dbReference type="NCBI Taxonomy" id="574521"/>
    <lineage>
        <taxon>Bacteria</taxon>
        <taxon>Pseudomonadati</taxon>
        <taxon>Pseudomonadota</taxon>
        <taxon>Gammaproteobacteria</taxon>
        <taxon>Enterobacterales</taxon>
        <taxon>Enterobacteriaceae</taxon>
        <taxon>Escherichia</taxon>
    </lineage>
</organism>
<protein>
    <recommendedName>
        <fullName evidence="1">Aspartate carbamoyltransferase regulatory chain</fullName>
    </recommendedName>
</protein>
<evidence type="ECO:0000255" key="1">
    <source>
        <dbReference type="HAMAP-Rule" id="MF_00002"/>
    </source>
</evidence>
<comment type="function">
    <text evidence="1">Involved in allosteric regulation of aspartate carbamoyltransferase.</text>
</comment>
<comment type="cofactor">
    <cofactor evidence="1">
        <name>Zn(2+)</name>
        <dbReference type="ChEBI" id="CHEBI:29105"/>
    </cofactor>
    <text evidence="1">Binds 1 zinc ion per subunit.</text>
</comment>
<comment type="subunit">
    <text evidence="1">Contains catalytic and regulatory chains.</text>
</comment>
<comment type="similarity">
    <text evidence="1">Belongs to the PyrI family.</text>
</comment>
<keyword id="KW-0479">Metal-binding</keyword>
<keyword id="KW-0665">Pyrimidine biosynthesis</keyword>
<keyword id="KW-1185">Reference proteome</keyword>
<keyword id="KW-0862">Zinc</keyword>
<proteinExistence type="inferred from homology"/>
<sequence length="153" mass="17121">MTHDNKLQVEAIKRGTVIDHIPAQIGFKLLSLFKLTETDQRITIGLNLPSGEMGRKDLIKIENTFLSEDQVDQLALYAPQATVNRIDNYEVVGKSRPSLPERIDNVLVCPNSNCISHAEPVSSSFAVRKRANDIALKCKYCEKEFSHNVVLAN</sequence>
<reference key="1">
    <citation type="journal article" date="2009" name="J. Bacteriol.">
        <title>Complete genome sequence and comparative genome analysis of enteropathogenic Escherichia coli O127:H6 strain E2348/69.</title>
        <authorList>
            <person name="Iguchi A."/>
            <person name="Thomson N.R."/>
            <person name="Ogura Y."/>
            <person name="Saunders D."/>
            <person name="Ooka T."/>
            <person name="Henderson I.R."/>
            <person name="Harris D."/>
            <person name="Asadulghani M."/>
            <person name="Kurokawa K."/>
            <person name="Dean P."/>
            <person name="Kenny B."/>
            <person name="Quail M.A."/>
            <person name="Thurston S."/>
            <person name="Dougan G."/>
            <person name="Hayashi T."/>
            <person name="Parkhill J."/>
            <person name="Frankel G."/>
        </authorList>
    </citation>
    <scope>NUCLEOTIDE SEQUENCE [LARGE SCALE GENOMIC DNA]</scope>
    <source>
        <strain>E2348/69 / EPEC</strain>
    </source>
</reference>
<feature type="chain" id="PRO_1000193108" description="Aspartate carbamoyltransferase regulatory chain">
    <location>
        <begin position="1"/>
        <end position="153"/>
    </location>
</feature>
<feature type="binding site" evidence="1">
    <location>
        <position position="109"/>
    </location>
    <ligand>
        <name>Zn(2+)</name>
        <dbReference type="ChEBI" id="CHEBI:29105"/>
    </ligand>
</feature>
<feature type="binding site" evidence="1">
    <location>
        <position position="114"/>
    </location>
    <ligand>
        <name>Zn(2+)</name>
        <dbReference type="ChEBI" id="CHEBI:29105"/>
    </ligand>
</feature>
<feature type="binding site" evidence="1">
    <location>
        <position position="138"/>
    </location>
    <ligand>
        <name>Zn(2+)</name>
        <dbReference type="ChEBI" id="CHEBI:29105"/>
    </ligand>
</feature>
<feature type="binding site" evidence="1">
    <location>
        <position position="141"/>
    </location>
    <ligand>
        <name>Zn(2+)</name>
        <dbReference type="ChEBI" id="CHEBI:29105"/>
    </ligand>
</feature>
<gene>
    <name evidence="1" type="primary">pyrI</name>
    <name type="ordered locus">E2348C_4570</name>
</gene>
<accession>B7UQQ4</accession>
<name>PYRI_ECO27</name>